<feature type="chain" id="PRO_0000431062" description="Putative uncharacterized membrane protein YPR050C">
    <location>
        <begin position="1"/>
        <end position="137"/>
    </location>
</feature>
<feature type="transmembrane region" description="Helical; Name=1" evidence="1">
    <location>
        <begin position="26"/>
        <end position="42"/>
    </location>
</feature>
<feature type="transmembrane region" description="Helical; Name=2" evidence="1">
    <location>
        <begin position="52"/>
        <end position="69"/>
    </location>
</feature>
<comment type="subcellular location">
    <subcellularLocation>
        <location evidence="1">Membrane</location>
        <topology evidence="1">Multi-pass membrane protein</topology>
    </subcellularLocation>
</comment>
<comment type="miscellaneous">
    <text evidence="2">Almost completely overlaps MAK3.</text>
</comment>
<comment type="caution">
    <text evidence="3">Product of a dubious gene prediction unlikely to encode a functional protein. Because of that it is not part of the S.cerevisiae S288c complete/reference proteome set.</text>
</comment>
<gene>
    <name evidence="4" type="ordered locus">YPR050C</name>
    <name type="ORF">YP9499.07b</name>
</gene>
<dbReference type="EMBL" id="KJ412299">
    <property type="protein sequence ID" value="AHX39342.1"/>
    <property type="molecule type" value="Genomic_DNA"/>
</dbReference>
<dbReference type="PIR" id="A44031">
    <property type="entry name" value="A44031"/>
</dbReference>
<dbReference type="STRING" id="4932.YPR050C"/>
<dbReference type="PaxDb" id="4932-YPR050C"/>
<dbReference type="EnsemblFungi" id="YPR050C_mRNA">
    <property type="protein sequence ID" value="YPR050C"/>
    <property type="gene ID" value="YPR050C"/>
</dbReference>
<dbReference type="AGR" id="SGD:S000006254"/>
<dbReference type="SGD" id="S000006254">
    <property type="gene designation" value="YPR050C"/>
</dbReference>
<dbReference type="HOGENOM" id="CLU_1866706_0_0_1"/>
<dbReference type="GO" id="GO:0016020">
    <property type="term" value="C:membrane"/>
    <property type="evidence" value="ECO:0007669"/>
    <property type="project" value="UniProtKB-SubCell"/>
</dbReference>
<organism>
    <name type="scientific">Saccharomyces cerevisiae (strain ATCC 204508 / S288c)</name>
    <name type="common">Baker's yeast</name>
    <dbReference type="NCBI Taxonomy" id="559292"/>
    <lineage>
        <taxon>Eukaryota</taxon>
        <taxon>Fungi</taxon>
        <taxon>Dikarya</taxon>
        <taxon>Ascomycota</taxon>
        <taxon>Saccharomycotina</taxon>
        <taxon>Saccharomycetes</taxon>
        <taxon>Saccharomycetales</taxon>
        <taxon>Saccharomycetaceae</taxon>
        <taxon>Saccharomyces</taxon>
    </lineage>
</organism>
<proteinExistence type="uncertain"/>
<protein>
    <recommendedName>
        <fullName evidence="2">Putative uncharacterized membrane protein YPR050C</fullName>
    </recommendedName>
</protein>
<reference key="1">
    <citation type="journal article" date="1997" name="Nature">
        <title>The nucleotide sequence of Saccharomyces cerevisiae chromosome XVI.</title>
        <authorList>
            <person name="Bussey H."/>
            <person name="Storms R.K."/>
            <person name="Ahmed A."/>
            <person name="Albermann K."/>
            <person name="Allen E."/>
            <person name="Ansorge W."/>
            <person name="Araujo R."/>
            <person name="Aparicio A."/>
            <person name="Barrell B.G."/>
            <person name="Badcock K."/>
            <person name="Benes V."/>
            <person name="Botstein D."/>
            <person name="Bowman S."/>
            <person name="Brueckner M."/>
            <person name="Carpenter J."/>
            <person name="Cherry J.M."/>
            <person name="Chung E."/>
            <person name="Churcher C.M."/>
            <person name="Coster F."/>
            <person name="Davis K."/>
            <person name="Davis R.W."/>
            <person name="Dietrich F.S."/>
            <person name="Delius H."/>
            <person name="DiPaolo T."/>
            <person name="Dubois E."/>
            <person name="Duesterhoeft A."/>
            <person name="Duncan M."/>
            <person name="Floeth M."/>
            <person name="Fortin N."/>
            <person name="Friesen J.D."/>
            <person name="Fritz C."/>
            <person name="Goffeau A."/>
            <person name="Hall J."/>
            <person name="Hebling U."/>
            <person name="Heumann K."/>
            <person name="Hilbert H."/>
            <person name="Hillier L.W."/>
            <person name="Hunicke-Smith S."/>
            <person name="Hyman R.W."/>
            <person name="Johnston M."/>
            <person name="Kalman S."/>
            <person name="Kleine K."/>
            <person name="Komp C."/>
            <person name="Kurdi O."/>
            <person name="Lashkari D."/>
            <person name="Lew H."/>
            <person name="Lin A."/>
            <person name="Lin D."/>
            <person name="Louis E.J."/>
            <person name="Marathe R."/>
            <person name="Messenguy F."/>
            <person name="Mewes H.-W."/>
            <person name="Mirtipati S."/>
            <person name="Moestl D."/>
            <person name="Mueller-Auer S."/>
            <person name="Namath A."/>
            <person name="Nentwich U."/>
            <person name="Oefner P."/>
            <person name="Pearson D."/>
            <person name="Petel F.X."/>
            <person name="Pohl T.M."/>
            <person name="Purnelle B."/>
            <person name="Rajandream M.A."/>
            <person name="Rechmann S."/>
            <person name="Rieger M."/>
            <person name="Riles L."/>
            <person name="Roberts D."/>
            <person name="Schaefer M."/>
            <person name="Scharfe M."/>
            <person name="Scherens B."/>
            <person name="Schramm S."/>
            <person name="Schroeder M."/>
            <person name="Sdicu A.-M."/>
            <person name="Tettelin H."/>
            <person name="Urrestarazu L.A."/>
            <person name="Ushinsky S."/>
            <person name="Vierendeels F."/>
            <person name="Vissers S."/>
            <person name="Voss H."/>
            <person name="Walsh S.V."/>
            <person name="Wambutt R."/>
            <person name="Wang Y."/>
            <person name="Wedler E."/>
            <person name="Wedler H."/>
            <person name="Winnett E."/>
            <person name="Zhong W.-W."/>
            <person name="Zollner A."/>
            <person name="Vo D.H."/>
            <person name="Hani J."/>
        </authorList>
    </citation>
    <scope>NUCLEOTIDE SEQUENCE [LARGE SCALE GENOMIC DNA]</scope>
    <source>
        <strain>ATCC 204508 / S288c</strain>
    </source>
</reference>
<reference key="2">
    <citation type="journal article" date="2014" name="G3 (Bethesda)">
        <title>The reference genome sequence of Saccharomyces cerevisiae: Then and now.</title>
        <authorList>
            <person name="Engel S.R."/>
            <person name="Dietrich F.S."/>
            <person name="Fisk D.G."/>
            <person name="Binkley G."/>
            <person name="Balakrishnan R."/>
            <person name="Costanzo M.C."/>
            <person name="Dwight S.S."/>
            <person name="Hitz B.C."/>
            <person name="Karra K."/>
            <person name="Nash R.S."/>
            <person name="Weng S."/>
            <person name="Wong E.D."/>
            <person name="Lloyd P."/>
            <person name="Skrzypek M.S."/>
            <person name="Miyasato S.R."/>
            <person name="Simison M."/>
            <person name="Cherry J.M."/>
        </authorList>
    </citation>
    <scope>GENOME REANNOTATION</scope>
    <source>
        <strain>ATCC 204508 / S288c</strain>
    </source>
</reference>
<evidence type="ECO:0000255" key="1"/>
<evidence type="ECO:0000305" key="2"/>
<evidence type="ECO:0000305" key="3">
    <source>
    </source>
</evidence>
<evidence type="ECO:0000312" key="4">
    <source>
        <dbReference type="SGD" id="S000006254"/>
    </source>
</evidence>
<name>YP050_YEAST</name>
<accession>A0A023PZM3</accession>
<sequence>MKPIPSYKFRAAEFSTSVSNMISSQCSLCILSMAISTSFFAMPCPRYVDSTASIPIYPLSLTFLCGSILHTMQPMGMLGVPLLLSTAMYVNSGHWFKKYLYTYIEYGSDRSASISFLILANCSSLRMSNGLYTISMS</sequence>
<keyword id="KW-0472">Membrane</keyword>
<keyword id="KW-0812">Transmembrane</keyword>
<keyword id="KW-1133">Transmembrane helix</keyword>